<feature type="chain" id="PRO_0000349411" description="HTH-type transcriptional regulator ArcR">
    <location>
        <begin position="1"/>
        <end position="234"/>
    </location>
</feature>
<feature type="domain" description="HTH crp-type" evidence="2">
    <location>
        <begin position="155"/>
        <end position="228"/>
    </location>
</feature>
<feature type="DNA-binding region" description="H-T-H motif" evidence="2">
    <location>
        <begin position="188"/>
        <end position="207"/>
    </location>
</feature>
<feature type="binding site">
    <location>
        <begin position="40"/>
        <end position="129"/>
    </location>
    <ligand>
        <name>a nucleoside 3',5'-cyclic phosphate</name>
        <dbReference type="ChEBI" id="CHEBI:58464"/>
    </ligand>
</feature>
<proteinExistence type="inferred from homology"/>
<keyword id="KW-0010">Activator</keyword>
<keyword id="KW-0114">cAMP</keyword>
<keyword id="KW-0116">cAMP-binding</keyword>
<keyword id="KW-0963">Cytoplasm</keyword>
<keyword id="KW-0238">DNA-binding</keyword>
<keyword id="KW-0547">Nucleotide-binding</keyword>
<keyword id="KW-0804">Transcription</keyword>
<keyword id="KW-0805">Transcription regulation</keyword>
<dbReference type="EMBL" id="BA000017">
    <property type="protein sequence ID" value="BAB58793.1"/>
    <property type="molecule type" value="Genomic_DNA"/>
</dbReference>
<dbReference type="RefSeq" id="WP_000138218.1">
    <property type="nucleotide sequence ID" value="NC_002758.2"/>
</dbReference>
<dbReference type="SMR" id="Q99R06"/>
<dbReference type="KEGG" id="sav:SAV2631"/>
<dbReference type="HOGENOM" id="CLU_1160528_0_0_9"/>
<dbReference type="PhylomeDB" id="Q99R06"/>
<dbReference type="Proteomes" id="UP000002481">
    <property type="component" value="Chromosome"/>
</dbReference>
<dbReference type="GO" id="GO:0005737">
    <property type="term" value="C:cytoplasm"/>
    <property type="evidence" value="ECO:0007669"/>
    <property type="project" value="UniProtKB-SubCell"/>
</dbReference>
<dbReference type="GO" id="GO:0030552">
    <property type="term" value="F:cAMP binding"/>
    <property type="evidence" value="ECO:0007669"/>
    <property type="project" value="UniProtKB-KW"/>
</dbReference>
<dbReference type="GO" id="GO:0003677">
    <property type="term" value="F:DNA binding"/>
    <property type="evidence" value="ECO:0007669"/>
    <property type="project" value="UniProtKB-KW"/>
</dbReference>
<dbReference type="GO" id="GO:0006355">
    <property type="term" value="P:regulation of DNA-templated transcription"/>
    <property type="evidence" value="ECO:0007669"/>
    <property type="project" value="InterPro"/>
</dbReference>
<dbReference type="Gene3D" id="2.60.120.10">
    <property type="entry name" value="Jelly Rolls"/>
    <property type="match status" value="1"/>
</dbReference>
<dbReference type="Gene3D" id="1.10.10.10">
    <property type="entry name" value="Winged helix-like DNA-binding domain superfamily/Winged helix DNA-binding domain"/>
    <property type="match status" value="1"/>
</dbReference>
<dbReference type="InterPro" id="IPR000595">
    <property type="entry name" value="cNMP-bd_dom"/>
</dbReference>
<dbReference type="InterPro" id="IPR018490">
    <property type="entry name" value="cNMP-bd_dom_sf"/>
</dbReference>
<dbReference type="InterPro" id="IPR012318">
    <property type="entry name" value="HTH_CRP"/>
</dbReference>
<dbReference type="InterPro" id="IPR014710">
    <property type="entry name" value="RmlC-like_jellyroll"/>
</dbReference>
<dbReference type="InterPro" id="IPR036388">
    <property type="entry name" value="WH-like_DNA-bd_sf"/>
</dbReference>
<dbReference type="InterPro" id="IPR036390">
    <property type="entry name" value="WH_DNA-bd_sf"/>
</dbReference>
<dbReference type="Pfam" id="PF00027">
    <property type="entry name" value="cNMP_binding"/>
    <property type="match status" value="1"/>
</dbReference>
<dbReference type="Pfam" id="PF13545">
    <property type="entry name" value="HTH_Crp_2"/>
    <property type="match status" value="1"/>
</dbReference>
<dbReference type="SUPFAM" id="SSF51206">
    <property type="entry name" value="cAMP-binding domain-like"/>
    <property type="match status" value="1"/>
</dbReference>
<dbReference type="SUPFAM" id="SSF46785">
    <property type="entry name" value="Winged helix' DNA-binding domain"/>
    <property type="match status" value="1"/>
</dbReference>
<dbReference type="PROSITE" id="PS51063">
    <property type="entry name" value="HTH_CRP_2"/>
    <property type="match status" value="1"/>
</dbReference>
<accession>Q99R06</accession>
<evidence type="ECO:0000250" key="1"/>
<evidence type="ECO:0000255" key="2">
    <source>
        <dbReference type="PROSITE-ProRule" id="PRU00387"/>
    </source>
</evidence>
<name>ARCR_STAAM</name>
<protein>
    <recommendedName>
        <fullName>HTH-type transcriptional regulator ArcR</fullName>
    </recommendedName>
</protein>
<gene>
    <name type="primary">arcR</name>
    <name type="ordered locus">SAV2631</name>
</gene>
<reference key="1">
    <citation type="journal article" date="2001" name="Lancet">
        <title>Whole genome sequencing of meticillin-resistant Staphylococcus aureus.</title>
        <authorList>
            <person name="Kuroda M."/>
            <person name="Ohta T."/>
            <person name="Uchiyama I."/>
            <person name="Baba T."/>
            <person name="Yuzawa H."/>
            <person name="Kobayashi I."/>
            <person name="Cui L."/>
            <person name="Oguchi A."/>
            <person name="Aoki K."/>
            <person name="Nagai Y."/>
            <person name="Lian J.-Q."/>
            <person name="Ito T."/>
            <person name="Kanamori M."/>
            <person name="Matsumaru H."/>
            <person name="Maruyama A."/>
            <person name="Murakami H."/>
            <person name="Hosoyama A."/>
            <person name="Mizutani-Ui Y."/>
            <person name="Takahashi N.K."/>
            <person name="Sawano T."/>
            <person name="Inoue R."/>
            <person name="Kaito C."/>
            <person name="Sekimizu K."/>
            <person name="Hirakawa H."/>
            <person name="Kuhara S."/>
            <person name="Goto S."/>
            <person name="Yabuzaki J."/>
            <person name="Kanehisa M."/>
            <person name="Yamashita A."/>
            <person name="Oshima K."/>
            <person name="Furuya K."/>
            <person name="Yoshino C."/>
            <person name="Shiba T."/>
            <person name="Hattori M."/>
            <person name="Ogasawara N."/>
            <person name="Hayashi H."/>
            <person name="Hiramatsu K."/>
        </authorList>
    </citation>
    <scope>NUCLEOTIDE SEQUENCE [LARGE SCALE GENOMIC DNA]</scope>
    <source>
        <strain>Mu50 / ATCC 700699</strain>
    </source>
</reference>
<comment type="function">
    <text evidence="1">Positively regulates the expression of the arcABDCR operon under anaerobic conditions, thus playing an essential role in arginine catabolism. May also control the expression of genes encoding proteins which are involved in anaerobic metabolism. Can bind cyclic AMP (By similarity).</text>
</comment>
<comment type="subcellular location">
    <subcellularLocation>
        <location evidence="1">Cytoplasm</location>
    </subcellularLocation>
</comment>
<organism>
    <name type="scientific">Staphylococcus aureus (strain Mu50 / ATCC 700699)</name>
    <dbReference type="NCBI Taxonomy" id="158878"/>
    <lineage>
        <taxon>Bacteria</taxon>
        <taxon>Bacillati</taxon>
        <taxon>Bacillota</taxon>
        <taxon>Bacilli</taxon>
        <taxon>Bacillales</taxon>
        <taxon>Staphylococcaceae</taxon>
        <taxon>Staphylococcus</taxon>
    </lineage>
</organism>
<sequence length="234" mass="27428">MTENFILGRNNKLEHELKALADYINIPYSILQPYQSECFVRHYTKGQVIYFSPQESSNIYFLIEGNIIREHYNQNGDVYRYFNKEQVLFPISNLFHPKEVNELCTALTDCTVLGLPRELMAFLCKANDDIFLTLFALINDNEQQHMNYNMALTSKFAKDRIIKLLCHLCQTVGYDQDEFYEIKQFLTIQLMSDMAGISRETAGHIIHELKDEKLVVKDHKNWLVSKHLFNDVCV</sequence>